<organism>
    <name type="scientific">Mycoplasma pneumoniae (strain ATCC 29342 / M129 / Subtype 1)</name>
    <name type="common">Mycoplasmoides pneumoniae</name>
    <dbReference type="NCBI Taxonomy" id="272634"/>
    <lineage>
        <taxon>Bacteria</taxon>
        <taxon>Bacillati</taxon>
        <taxon>Mycoplasmatota</taxon>
        <taxon>Mycoplasmoidales</taxon>
        <taxon>Mycoplasmoidaceae</taxon>
        <taxon>Mycoplasmoides</taxon>
    </lineage>
</organism>
<keyword id="KW-1185">Reference proteome</keyword>
<proteinExistence type="inferred from homology"/>
<name>Y589_MYCPN</name>
<gene>
    <name type="ordered locus">MPN_589</name>
    <name type="ORF">D02_orf157L</name>
    <name type="ORF">MP253</name>
</gene>
<sequence length="157" mass="17607">MGYPTLWTDDAKLFEWTKTEQRFNHDDFYGSMPTLTKNLRQGQPVAGSKVHTDYSNGFLNEYSLNQGIVDFGTFKSAITDYHGYEYKNHGYGLALTDTDLLGGSSGSLVFNQDKKISSIYSAATESDSVGYAQLLPVPKDVNGVSLVKYSYDLILWW</sequence>
<accession>Q50338</accession>
<accession>P75192</accession>
<feature type="chain" id="PRO_0000210735" description="Uncharacterized protein MPN_589">
    <location>
        <begin position="1"/>
        <end position="157"/>
    </location>
</feature>
<protein>
    <recommendedName>
        <fullName>Uncharacterized protein MPN_589</fullName>
    </recommendedName>
</protein>
<reference key="1">
    <citation type="journal article" date="1996" name="Nucleic Acids Res.">
        <title>Sequence analysis of 56 kb from the genome of the bacterium Mycoplasma pneumoniae comprising the dnaA region, the atp operon and a cluster of ribosomal protein genes.</title>
        <authorList>
            <person name="Hilbert H."/>
            <person name="Himmelreich R."/>
            <person name="Plagens H."/>
            <person name="Herrmann R."/>
        </authorList>
    </citation>
    <scope>NUCLEOTIDE SEQUENCE [GENOMIC DNA]</scope>
    <source>
        <strain>ATCC 29342 / M129 / Subtype 1</strain>
    </source>
</reference>
<reference key="2">
    <citation type="journal article" date="1996" name="Nucleic Acids Res.">
        <title>Complete sequence analysis of the genome of the bacterium Mycoplasma pneumoniae.</title>
        <authorList>
            <person name="Himmelreich R."/>
            <person name="Hilbert H."/>
            <person name="Plagens H."/>
            <person name="Pirkl E."/>
            <person name="Li B.-C."/>
            <person name="Herrmann R."/>
        </authorList>
    </citation>
    <scope>NUCLEOTIDE SEQUENCE [LARGE SCALE GENOMIC DNA]</scope>
    <source>
        <strain>ATCC 29342 / M129 / Subtype 1</strain>
    </source>
</reference>
<evidence type="ECO:0000305" key="1"/>
<dbReference type="EMBL" id="U43738">
    <property type="protein sequence ID" value="AAC43667.1"/>
    <property type="molecule type" value="Genomic_DNA"/>
</dbReference>
<dbReference type="EMBL" id="U00089">
    <property type="protein sequence ID" value="AAB95901.1"/>
    <property type="molecule type" value="Genomic_DNA"/>
</dbReference>
<dbReference type="PIR" id="S62855">
    <property type="entry name" value="S62855"/>
</dbReference>
<dbReference type="RefSeq" id="NP_110278.1">
    <property type="nucleotide sequence ID" value="NC_000912.1"/>
</dbReference>
<dbReference type="RefSeq" id="WP_010874946.1">
    <property type="nucleotide sequence ID" value="NZ_OU342337.1"/>
</dbReference>
<dbReference type="STRING" id="272634.MPN_589"/>
<dbReference type="EnsemblBacteria" id="AAB95901">
    <property type="protein sequence ID" value="AAB95901"/>
    <property type="gene ID" value="MPN_589"/>
</dbReference>
<dbReference type="KEGG" id="mpn:MPN_589"/>
<dbReference type="PATRIC" id="fig|272634.6.peg.652"/>
<dbReference type="HOGENOM" id="CLU_1675944_0_0_14"/>
<dbReference type="BioCyc" id="MPNE272634:G1GJ3-961-MONOMER"/>
<dbReference type="Proteomes" id="UP000000808">
    <property type="component" value="Chromosome"/>
</dbReference>
<dbReference type="GO" id="GO:0005524">
    <property type="term" value="F:ATP binding"/>
    <property type="evidence" value="ECO:0007669"/>
    <property type="project" value="InterPro"/>
</dbReference>
<dbReference type="GO" id="GO:0003723">
    <property type="term" value="F:RNA binding"/>
    <property type="evidence" value="ECO:0007669"/>
    <property type="project" value="InterPro"/>
</dbReference>
<dbReference type="GO" id="GO:0003724">
    <property type="term" value="F:RNA helicase activity"/>
    <property type="evidence" value="ECO:0007669"/>
    <property type="project" value="InterPro"/>
</dbReference>
<dbReference type="InterPro" id="IPR001850">
    <property type="entry name" value="Flavi_NS3_S7"/>
</dbReference>
<dbReference type="InterPro" id="IPR009003">
    <property type="entry name" value="Peptidase_S1_PA"/>
</dbReference>
<dbReference type="InterPro" id="IPR022381">
    <property type="entry name" value="Uncharacterised_MG067"/>
</dbReference>
<dbReference type="Pfam" id="PF00949">
    <property type="entry name" value="Peptidase_S7"/>
    <property type="match status" value="1"/>
</dbReference>
<dbReference type="PRINTS" id="PR00840">
    <property type="entry name" value="Y06768FAMILY"/>
</dbReference>
<dbReference type="SUPFAM" id="SSF50494">
    <property type="entry name" value="Trypsin-like serine proteases"/>
    <property type="match status" value="1"/>
</dbReference>
<comment type="similarity">
    <text evidence="1">Belongs to the MG067/MG068/MG395 family.</text>
</comment>